<proteinExistence type="inferred from homology"/>
<organism>
    <name type="scientific">Lymantria dispar multicapsid nuclear polyhedrosis virus</name>
    <name type="common">LdMNPV</name>
    <dbReference type="NCBI Taxonomy" id="10449"/>
    <lineage>
        <taxon>Viruses</taxon>
        <taxon>Viruses incertae sedis</taxon>
        <taxon>Naldaviricetes</taxon>
        <taxon>Lefavirales</taxon>
        <taxon>Baculoviridae</taxon>
        <taxon>Alphabaculovirus</taxon>
        <taxon>Alphabaculovirus lydisparis</taxon>
    </lineage>
</organism>
<sequence length="506" mass="57125">MTAYLIVFCLCCWSAARSANILAYFPTPSYSHQLVFRAYVELLAERGHAVTVIRPLTRVDFNRNAGNLTTIDLDGDGLLLLMKASTTHRKRGIVADTDTVTADNYEALVRMVDRQIHSEPFQRHLKSARRGYDLLVVEAFVDYALIASHLFGDVPVVQISSGHATAENFETMGATSRHPRYYPNLWRFNFGPLSVWDGVRELYTELRLQREFGLLADRQDALLKRRFGPEAPGLRELRSRVRLLFVNVHSVFDNNRPVPPSVQYLGGLHLHDRRAEPLSEAVARFLDESRRGVVYVSFGSGLATEDMDADMAAALLDAFKMMPYDVLWKHDGRVDGLTIPANVFVQKWFAQFEVLQHKNVKAFVTQAGVQSTDEAVENLVPLVGVPLMGDQAFNAHRYVELGIGVALDATRLTAADLARAVEQVTSDRAYRENLERLRRLLRHQCASPTHKAVWYTEHALRRDGDALKTKAANVDYAEYCMSDLLAPLLSVSLMSHLHSLIRMFVW</sequence>
<organismHost>
    <name type="scientific">Lepidoptera</name>
    <name type="common">butterflies and moths</name>
    <dbReference type="NCBI Taxonomy" id="7088"/>
</organismHost>
<accession>P41713</accession>
<accession>Q9YMK2</accession>
<protein>
    <recommendedName>
        <fullName>Ecdysteroid UDP-glucosyltransferase</fullName>
        <ecNumber>2.4.1.-</ecNumber>
    </recommendedName>
</protein>
<dbReference type="EC" id="2.4.1.-"/>
<dbReference type="EMBL" id="U04321">
    <property type="protein sequence ID" value="AAA18788.1"/>
    <property type="molecule type" value="Unassigned_DNA"/>
</dbReference>
<dbReference type="EMBL" id="AF081810">
    <property type="protein sequence ID" value="AAC70311.1"/>
    <property type="status" value="ALT_INIT"/>
    <property type="molecule type" value="Genomic_DNA"/>
</dbReference>
<dbReference type="PIR" id="T30475">
    <property type="entry name" value="T30475"/>
</dbReference>
<dbReference type="RefSeq" id="NP_047762.1">
    <property type="nucleotide sequence ID" value="NC_001973.1"/>
</dbReference>
<dbReference type="SMR" id="P41713"/>
<dbReference type="CAZy" id="GT1">
    <property type="family name" value="Glycosyltransferase Family 1"/>
</dbReference>
<dbReference type="KEGG" id="vg:1488529"/>
<dbReference type="OrthoDB" id="5462at10239"/>
<dbReference type="Proteomes" id="UP000203997">
    <property type="component" value="Genome"/>
</dbReference>
<dbReference type="GO" id="GO:0008194">
    <property type="term" value="F:UDP-glycosyltransferase activity"/>
    <property type="evidence" value="ECO:0007669"/>
    <property type="project" value="InterPro"/>
</dbReference>
<dbReference type="CDD" id="cd03784">
    <property type="entry name" value="GT1_Gtf-like"/>
    <property type="match status" value="1"/>
</dbReference>
<dbReference type="FunFam" id="3.40.50.2000:FF:000021">
    <property type="entry name" value="UDP-glucuronosyltransferase"/>
    <property type="match status" value="1"/>
</dbReference>
<dbReference type="Gene3D" id="3.40.50.2000">
    <property type="entry name" value="Glycogen Phosphorylase B"/>
    <property type="match status" value="2"/>
</dbReference>
<dbReference type="InterPro" id="IPR016224">
    <property type="entry name" value="Ecdysteroid_UDP-Glc_Trfase"/>
</dbReference>
<dbReference type="InterPro" id="IPR050271">
    <property type="entry name" value="UDP-glycosyltransferase"/>
</dbReference>
<dbReference type="InterPro" id="IPR002213">
    <property type="entry name" value="UDP_glucos_trans"/>
</dbReference>
<dbReference type="InterPro" id="IPR035595">
    <property type="entry name" value="UDP_glycos_trans_CS"/>
</dbReference>
<dbReference type="PANTHER" id="PTHR48043">
    <property type="entry name" value="EG:EG0003.4 PROTEIN-RELATED"/>
    <property type="match status" value="1"/>
</dbReference>
<dbReference type="PANTHER" id="PTHR48043:SF145">
    <property type="entry name" value="FI06409P-RELATED"/>
    <property type="match status" value="1"/>
</dbReference>
<dbReference type="Pfam" id="PF00201">
    <property type="entry name" value="UDPGT"/>
    <property type="match status" value="1"/>
</dbReference>
<dbReference type="PIRSF" id="PIRSF000476">
    <property type="entry name" value="Ecdystd_UDP_glucosyltfrase"/>
    <property type="match status" value="1"/>
</dbReference>
<dbReference type="SUPFAM" id="SSF53756">
    <property type="entry name" value="UDP-Glycosyltransferase/glycogen phosphorylase"/>
    <property type="match status" value="1"/>
</dbReference>
<dbReference type="PROSITE" id="PS00375">
    <property type="entry name" value="UDPGT"/>
    <property type="match status" value="1"/>
</dbReference>
<keyword id="KW-0328">Glycosyltransferase</keyword>
<keyword id="KW-1185">Reference proteome</keyword>
<keyword id="KW-0732">Signal</keyword>
<keyword id="KW-0808">Transferase</keyword>
<evidence type="ECO:0000250" key="1"/>
<evidence type="ECO:0000255" key="2"/>
<evidence type="ECO:0000305" key="3"/>
<comment type="function">
    <text evidence="1">Catalyzes the transfer of glucose from UDP-glucose to ecdysteroids which are insect molting hormones. Expression of egt interferes with normal insect development and block molting (By similarity).</text>
</comment>
<comment type="similarity">
    <text evidence="3">Belongs to the UDP-glycosyltransferase family.</text>
</comment>
<comment type="sequence caution" evidence="3">
    <conflict type="erroneous initiation">
        <sequence resource="EMBL-CDS" id="AAC70311"/>
    </conflict>
</comment>
<name>UDPE_NPVLD</name>
<reference key="1">
    <citation type="journal article" date="1994" name="J. Gen. Virol.">
        <title>Identification and characterization of the ecdysteroid UDP-glucosyltransferase gene of the Lymantria dispar multinucleocapsid nuclear polyhedrosis virus.</title>
        <authorList>
            <person name="Riegel C.I."/>
            <person name="Lanner-Herrera C."/>
            <person name="Slavicek J.M."/>
        </authorList>
    </citation>
    <scope>NUCLEOTIDE SEQUENCE</scope>
    <source>
        <strain>A21-2</strain>
    </source>
</reference>
<reference key="2">
    <citation type="journal article" date="1999" name="Virology">
        <title>Sequence and analysis of the genome of a baculovirus pathogenic for Lymantria dispar.</title>
        <authorList>
            <person name="Kuzio J."/>
            <person name="Pearson M.N."/>
            <person name="Harwood S.H."/>
            <person name="Funk C.J."/>
            <person name="Evans J.T."/>
            <person name="Slavicek J.M."/>
            <person name="Rohrmann G.F."/>
        </authorList>
    </citation>
    <scope>NUCLEOTIDE SEQUENCE [GENOMIC DNA]</scope>
</reference>
<gene>
    <name type="primary">EGT</name>
    <name type="synonym">UGT21A4</name>
    <name type="ordered locus">LdOrf-125</name>
</gene>
<feature type="signal peptide" evidence="2">
    <location>
        <begin position="1"/>
        <end position="18"/>
    </location>
</feature>
<feature type="chain" id="PRO_0000036060" description="Ecdysteroid UDP-glucosyltransferase">
    <location>
        <begin position="19"/>
        <end position="506"/>
    </location>
</feature>
<feature type="sequence conflict" description="In Ref. 1; AAA18788." evidence="3" ref="1">
    <original>DLLAPLLSVSLMSHLHSLIRMFVW</original>
    <variation>TCWRPC</variation>
    <location>
        <begin position="483"/>
        <end position="506"/>
    </location>
</feature>